<dbReference type="EC" id="1.1.1.307"/>
<dbReference type="EMBL" id="AY193716">
    <property type="protein sequence ID" value="AAO91803.1"/>
    <property type="molecule type" value="mRNA"/>
</dbReference>
<dbReference type="SMR" id="Q6Y0Z3"/>
<dbReference type="KEGG" id="ag:AAO91803"/>
<dbReference type="VEuPathDB" id="FungiDB:CPAR2_101350"/>
<dbReference type="BioCyc" id="MetaCyc:MONOMER-21874"/>
<dbReference type="BRENDA" id="1.1.1.307">
    <property type="organism ID" value="1133"/>
</dbReference>
<dbReference type="UniPathway" id="UPA00810"/>
<dbReference type="GO" id="GO:0032866">
    <property type="term" value="F:D-xylose reductase (NADPH) activity"/>
    <property type="evidence" value="ECO:0007669"/>
    <property type="project" value="EnsemblFungi"/>
</dbReference>
<dbReference type="GO" id="GO:0003729">
    <property type="term" value="F:mRNA binding"/>
    <property type="evidence" value="ECO:0007669"/>
    <property type="project" value="EnsemblFungi"/>
</dbReference>
<dbReference type="GO" id="GO:0019568">
    <property type="term" value="P:arabinose catabolic process"/>
    <property type="evidence" value="ECO:0007669"/>
    <property type="project" value="EnsemblFungi"/>
</dbReference>
<dbReference type="GO" id="GO:0071470">
    <property type="term" value="P:cellular response to osmotic stress"/>
    <property type="evidence" value="ECO:0007669"/>
    <property type="project" value="EnsemblFungi"/>
</dbReference>
<dbReference type="GO" id="GO:0034599">
    <property type="term" value="P:cellular response to oxidative stress"/>
    <property type="evidence" value="ECO:0007669"/>
    <property type="project" value="EnsemblFungi"/>
</dbReference>
<dbReference type="GO" id="GO:0042843">
    <property type="term" value="P:D-xylose catabolic process"/>
    <property type="evidence" value="ECO:0007669"/>
    <property type="project" value="UniProtKB-UniPathway"/>
</dbReference>
<dbReference type="GO" id="GO:0019388">
    <property type="term" value="P:galactose catabolic process"/>
    <property type="evidence" value="ECO:0007669"/>
    <property type="project" value="EnsemblFungi"/>
</dbReference>
<dbReference type="CDD" id="cd19113">
    <property type="entry name" value="AKR_AKR2B1-10"/>
    <property type="match status" value="1"/>
</dbReference>
<dbReference type="FunFam" id="3.20.20.100:FF:000007">
    <property type="entry name" value="NAD(P)H-dependent D-xylose reductase xyl1"/>
    <property type="match status" value="1"/>
</dbReference>
<dbReference type="Gene3D" id="3.20.20.100">
    <property type="entry name" value="NADP-dependent oxidoreductase domain"/>
    <property type="match status" value="1"/>
</dbReference>
<dbReference type="InterPro" id="IPR020471">
    <property type="entry name" value="AKR"/>
</dbReference>
<dbReference type="InterPro" id="IPR044486">
    <property type="entry name" value="AKR2B1"/>
</dbReference>
<dbReference type="InterPro" id="IPR018170">
    <property type="entry name" value="Aldo/ket_reductase_CS"/>
</dbReference>
<dbReference type="InterPro" id="IPR023210">
    <property type="entry name" value="NADP_OxRdtase_dom"/>
</dbReference>
<dbReference type="InterPro" id="IPR036812">
    <property type="entry name" value="NADP_OxRdtase_dom_sf"/>
</dbReference>
<dbReference type="PANTHER" id="PTHR11732">
    <property type="entry name" value="ALDO/KETO REDUCTASE"/>
    <property type="match status" value="1"/>
</dbReference>
<dbReference type="Pfam" id="PF00248">
    <property type="entry name" value="Aldo_ket_red"/>
    <property type="match status" value="1"/>
</dbReference>
<dbReference type="PIRSF" id="PIRSF000097">
    <property type="entry name" value="AKR"/>
    <property type="match status" value="1"/>
</dbReference>
<dbReference type="PRINTS" id="PR00069">
    <property type="entry name" value="ALDKETRDTASE"/>
</dbReference>
<dbReference type="SUPFAM" id="SSF51430">
    <property type="entry name" value="NAD(P)-linked oxidoreductase"/>
    <property type="match status" value="1"/>
</dbReference>
<dbReference type="PROSITE" id="PS00798">
    <property type="entry name" value="ALDOKETO_REDUCTASE_1"/>
    <property type="match status" value="1"/>
</dbReference>
<dbReference type="PROSITE" id="PS00062">
    <property type="entry name" value="ALDOKETO_REDUCTASE_2"/>
    <property type="match status" value="1"/>
</dbReference>
<dbReference type="PROSITE" id="PS00063">
    <property type="entry name" value="ALDOKETO_REDUCTASE_3"/>
    <property type="match status" value="1"/>
</dbReference>
<proteinExistence type="evidence at protein level"/>
<protein>
    <recommendedName>
        <fullName>NADH-dependent D-xylose reductase</fullName>
        <shortName>XR</shortName>
        <ecNumber>1.1.1.307</ecNumber>
    </recommendedName>
</protein>
<organism>
    <name type="scientific">Candida parapsilosis</name>
    <name type="common">Yeast</name>
    <dbReference type="NCBI Taxonomy" id="5480"/>
    <lineage>
        <taxon>Eukaryota</taxon>
        <taxon>Fungi</taxon>
        <taxon>Dikarya</taxon>
        <taxon>Ascomycota</taxon>
        <taxon>Saccharomycotina</taxon>
        <taxon>Pichiomycetes</taxon>
        <taxon>Debaryomycetaceae</taxon>
        <taxon>Candida/Lodderomyces clade</taxon>
        <taxon>Candida</taxon>
    </lineage>
</organism>
<name>XYL1_CANPA</name>
<feature type="chain" id="PRO_0000124659" description="NADH-dependent D-xylose reductase">
    <location>
        <begin position="1"/>
        <end position="324"/>
    </location>
</feature>
<feature type="active site" description="Proton donor" evidence="1">
    <location>
        <position position="54"/>
    </location>
</feature>
<feature type="binding site" evidence="1">
    <location>
        <position position="116"/>
    </location>
    <ligand>
        <name>substrate</name>
    </ligand>
</feature>
<feature type="binding site" evidence="1">
    <location>
        <begin position="220"/>
        <end position="286"/>
    </location>
    <ligand>
        <name>NAD(+)</name>
        <dbReference type="ChEBI" id="CHEBI:57540"/>
    </ligand>
</feature>
<feature type="site" description="Lowers pKa of active site Tyr" evidence="1">
    <location>
        <position position="83"/>
    </location>
</feature>
<sequence length="324" mass="36629">MSTATASPAVKLNSGYEIPLVGFGCWKLTNDVASDQIYRAIKSGYRLFDGAEDYANEQEVGEGIKRAIKEGIVKREELFITSKLWNSFHDKKNVEVALMKTLSDLNLDYVDLFYIHFPIAQKPVPIEKKYPPGFYCGDGDKWSIEEVPLLDTWRALEKLVDQGLAKSIGISNFSAQLIYDLIRGCTIKPVALQIEHHPYLTQPKLVEYVQLHDIQITGYSSFGPQSFLEMDLKRALDTPVLLEEPTVKSIADKHGKSPAQVLLRYQTQRGIAVIPRSNSPDRMAQNLSVIDFELTQDDLQAIAELDCNLRFNEPWDFSNIPVFV</sequence>
<keyword id="KW-0119">Carbohydrate metabolism</keyword>
<keyword id="KW-0903">Direct protein sequencing</keyword>
<keyword id="KW-0520">NAD</keyword>
<keyword id="KW-0560">Oxidoreductase</keyword>
<keyword id="KW-0859">Xylose metabolism</keyword>
<gene>
    <name type="primary">XYL1</name>
</gene>
<reference key="1">
    <citation type="journal article" date="2003" name="Appl. Environ. Microbiol.">
        <title>Cloning and characterization of the xyl1 gene, encoding an NADH-preferring xylose reductase from Candida parapsilosis, and its functional expression in Candida tropicalis.</title>
        <authorList>
            <person name="Lee J.K."/>
            <person name="Koo B.S."/>
            <person name="Kim S.Y."/>
        </authorList>
    </citation>
    <scope>NUCLEOTIDE SEQUENCE [MRNA]</scope>
    <scope>PARTIAL PROTEIN SEQUENCE</scope>
    <scope>CHARACTERIZATION</scope>
    <source>
        <strain>KFCC-10875</strain>
    </source>
</reference>
<accession>Q6Y0Z3</accession>
<comment type="function">
    <text>Reduces D-xylose into xylitol. Preferentially utilizes NADH as a cosubstrate.</text>
</comment>
<comment type="catalytic activity">
    <reaction>
        <text>xylitol + NAD(+) = D-xylose + NADH + H(+)</text>
        <dbReference type="Rhea" id="RHEA:27441"/>
        <dbReference type="ChEBI" id="CHEBI:15378"/>
        <dbReference type="ChEBI" id="CHEBI:17151"/>
        <dbReference type="ChEBI" id="CHEBI:53455"/>
        <dbReference type="ChEBI" id="CHEBI:57540"/>
        <dbReference type="ChEBI" id="CHEBI:57945"/>
        <dbReference type="EC" id="1.1.1.307"/>
    </reaction>
</comment>
<comment type="catalytic activity">
    <reaction>
        <text>xylitol + NADP(+) = D-xylose + NADPH + H(+)</text>
        <dbReference type="Rhea" id="RHEA:27445"/>
        <dbReference type="ChEBI" id="CHEBI:15378"/>
        <dbReference type="ChEBI" id="CHEBI:17151"/>
        <dbReference type="ChEBI" id="CHEBI:53455"/>
        <dbReference type="ChEBI" id="CHEBI:57783"/>
        <dbReference type="ChEBI" id="CHEBI:58349"/>
        <dbReference type="EC" id="1.1.1.307"/>
    </reaction>
</comment>
<comment type="pathway">
    <text>Carbohydrate metabolism; D-xylose degradation.</text>
</comment>
<comment type="similarity">
    <text evidence="2">Belongs to the aldo/keto reductase family.</text>
</comment>
<evidence type="ECO:0000250" key="1"/>
<evidence type="ECO:0000305" key="2"/>